<feature type="chain" id="PRO_1000081501" description="Large ribosomal subunit protein bL9">
    <location>
        <begin position="1"/>
        <end position="150"/>
    </location>
</feature>
<dbReference type="EMBL" id="CP000931">
    <property type="protein sequence ID" value="ABZ78213.1"/>
    <property type="molecule type" value="Genomic_DNA"/>
</dbReference>
<dbReference type="RefSeq" id="WP_012278732.1">
    <property type="nucleotide sequence ID" value="NC_010334.1"/>
</dbReference>
<dbReference type="SMR" id="B0TUU6"/>
<dbReference type="STRING" id="458817.Shal_3672"/>
<dbReference type="KEGG" id="shl:Shal_3672"/>
<dbReference type="eggNOG" id="COG0359">
    <property type="taxonomic scope" value="Bacteria"/>
</dbReference>
<dbReference type="HOGENOM" id="CLU_078938_4_1_6"/>
<dbReference type="OrthoDB" id="9788336at2"/>
<dbReference type="Proteomes" id="UP000001317">
    <property type="component" value="Chromosome"/>
</dbReference>
<dbReference type="GO" id="GO:1990904">
    <property type="term" value="C:ribonucleoprotein complex"/>
    <property type="evidence" value="ECO:0007669"/>
    <property type="project" value="UniProtKB-KW"/>
</dbReference>
<dbReference type="GO" id="GO:0005840">
    <property type="term" value="C:ribosome"/>
    <property type="evidence" value="ECO:0007669"/>
    <property type="project" value="UniProtKB-KW"/>
</dbReference>
<dbReference type="GO" id="GO:0019843">
    <property type="term" value="F:rRNA binding"/>
    <property type="evidence" value="ECO:0007669"/>
    <property type="project" value="UniProtKB-UniRule"/>
</dbReference>
<dbReference type="GO" id="GO:0003735">
    <property type="term" value="F:structural constituent of ribosome"/>
    <property type="evidence" value="ECO:0007669"/>
    <property type="project" value="InterPro"/>
</dbReference>
<dbReference type="GO" id="GO:0006412">
    <property type="term" value="P:translation"/>
    <property type="evidence" value="ECO:0007669"/>
    <property type="project" value="UniProtKB-UniRule"/>
</dbReference>
<dbReference type="FunFam" id="3.10.430.100:FF:000001">
    <property type="entry name" value="50S ribosomal protein L9"/>
    <property type="match status" value="1"/>
</dbReference>
<dbReference type="FunFam" id="3.40.5.10:FF:000001">
    <property type="entry name" value="50S ribosomal protein L9"/>
    <property type="match status" value="1"/>
</dbReference>
<dbReference type="Gene3D" id="3.10.430.100">
    <property type="entry name" value="Ribosomal protein L9, C-terminal domain"/>
    <property type="match status" value="1"/>
</dbReference>
<dbReference type="Gene3D" id="3.40.5.10">
    <property type="entry name" value="Ribosomal protein L9, N-terminal domain"/>
    <property type="match status" value="1"/>
</dbReference>
<dbReference type="HAMAP" id="MF_00503">
    <property type="entry name" value="Ribosomal_bL9"/>
    <property type="match status" value="1"/>
</dbReference>
<dbReference type="InterPro" id="IPR000244">
    <property type="entry name" value="Ribosomal_bL9"/>
</dbReference>
<dbReference type="InterPro" id="IPR009027">
    <property type="entry name" value="Ribosomal_bL9/RNase_H1_N"/>
</dbReference>
<dbReference type="InterPro" id="IPR020594">
    <property type="entry name" value="Ribosomal_bL9_bac/chp"/>
</dbReference>
<dbReference type="InterPro" id="IPR020069">
    <property type="entry name" value="Ribosomal_bL9_C"/>
</dbReference>
<dbReference type="InterPro" id="IPR036791">
    <property type="entry name" value="Ribosomal_bL9_C_sf"/>
</dbReference>
<dbReference type="InterPro" id="IPR020070">
    <property type="entry name" value="Ribosomal_bL9_N"/>
</dbReference>
<dbReference type="InterPro" id="IPR036935">
    <property type="entry name" value="Ribosomal_bL9_N_sf"/>
</dbReference>
<dbReference type="NCBIfam" id="TIGR00158">
    <property type="entry name" value="L9"/>
    <property type="match status" value="1"/>
</dbReference>
<dbReference type="PANTHER" id="PTHR21368">
    <property type="entry name" value="50S RIBOSOMAL PROTEIN L9"/>
    <property type="match status" value="1"/>
</dbReference>
<dbReference type="Pfam" id="PF03948">
    <property type="entry name" value="Ribosomal_L9_C"/>
    <property type="match status" value="1"/>
</dbReference>
<dbReference type="Pfam" id="PF01281">
    <property type="entry name" value="Ribosomal_L9_N"/>
    <property type="match status" value="1"/>
</dbReference>
<dbReference type="SUPFAM" id="SSF55658">
    <property type="entry name" value="L9 N-domain-like"/>
    <property type="match status" value="1"/>
</dbReference>
<dbReference type="SUPFAM" id="SSF55653">
    <property type="entry name" value="Ribosomal protein L9 C-domain"/>
    <property type="match status" value="1"/>
</dbReference>
<dbReference type="PROSITE" id="PS00651">
    <property type="entry name" value="RIBOSOMAL_L9"/>
    <property type="match status" value="1"/>
</dbReference>
<evidence type="ECO:0000255" key="1">
    <source>
        <dbReference type="HAMAP-Rule" id="MF_00503"/>
    </source>
</evidence>
<evidence type="ECO:0000305" key="2"/>
<name>RL9_SHEHH</name>
<comment type="function">
    <text evidence="1">Binds to the 23S rRNA.</text>
</comment>
<comment type="similarity">
    <text evidence="1">Belongs to the bacterial ribosomal protein bL9 family.</text>
</comment>
<organism>
    <name type="scientific">Shewanella halifaxensis (strain HAW-EB4)</name>
    <dbReference type="NCBI Taxonomy" id="458817"/>
    <lineage>
        <taxon>Bacteria</taxon>
        <taxon>Pseudomonadati</taxon>
        <taxon>Pseudomonadota</taxon>
        <taxon>Gammaproteobacteria</taxon>
        <taxon>Alteromonadales</taxon>
        <taxon>Shewanellaceae</taxon>
        <taxon>Shewanella</taxon>
    </lineage>
</organism>
<keyword id="KW-0687">Ribonucleoprotein</keyword>
<keyword id="KW-0689">Ribosomal protein</keyword>
<keyword id="KW-0694">RNA-binding</keyword>
<keyword id="KW-0699">rRNA-binding</keyword>
<proteinExistence type="inferred from homology"/>
<gene>
    <name evidence="1" type="primary">rplI</name>
    <name type="ordered locus">Shal_3672</name>
</gene>
<sequence>MNVILLDKIANLGNLGDQVSVKAGYARNFLLPQGKAVVANAANTEVFEARRADLEAKLAADLAAATQRAEKISALESVVIASKAGDEGKLFGSIGNRDIADAVTAAGVELAKSEVRLPLGAIRTTGEFEVEVQVHTEVKAIVKLSVVAEA</sequence>
<reference key="1">
    <citation type="submission" date="2008-01" db="EMBL/GenBank/DDBJ databases">
        <title>Complete sequence of Shewanella halifaxensis HAW-EB4.</title>
        <authorList>
            <consortium name="US DOE Joint Genome Institute"/>
            <person name="Copeland A."/>
            <person name="Lucas S."/>
            <person name="Lapidus A."/>
            <person name="Glavina del Rio T."/>
            <person name="Dalin E."/>
            <person name="Tice H."/>
            <person name="Bruce D."/>
            <person name="Goodwin L."/>
            <person name="Pitluck S."/>
            <person name="Sims D."/>
            <person name="Brettin T."/>
            <person name="Detter J.C."/>
            <person name="Han C."/>
            <person name="Kuske C.R."/>
            <person name="Schmutz J."/>
            <person name="Larimer F."/>
            <person name="Land M."/>
            <person name="Hauser L."/>
            <person name="Kyrpides N."/>
            <person name="Kim E."/>
            <person name="Zhao J.-S."/>
            <person name="Richardson P."/>
        </authorList>
    </citation>
    <scope>NUCLEOTIDE SEQUENCE [LARGE SCALE GENOMIC DNA]</scope>
    <source>
        <strain>HAW-EB4</strain>
    </source>
</reference>
<accession>B0TUU6</accession>
<protein>
    <recommendedName>
        <fullName evidence="1">Large ribosomal subunit protein bL9</fullName>
    </recommendedName>
    <alternativeName>
        <fullName evidence="2">50S ribosomal protein L9</fullName>
    </alternativeName>
</protein>